<keyword id="KW-0479">Metal-binding</keyword>
<keyword id="KW-0480">Metal-thiolate cluster</keyword>
<keyword id="KW-1185">Reference proteome</keyword>
<comment type="function">
    <text evidence="1">Metallothioneins have a high content of cysteine residues that bind various heavy metals.</text>
</comment>
<comment type="domain">
    <text>Class I metallothioneins contain 2 metal-binding domains: four divalent ions are chelated within cluster A of the alpha domain and are coordinated via cysteinyl thiolate bridges to 11 cysteine ligands. Cluster B, the corresponding region within the beta domain, can ligate three divalent ions to 9 cysteines.</text>
</comment>
<comment type="similarity">
    <text evidence="4">Belongs to the metallothionein superfamily. Type 1 family.</text>
</comment>
<evidence type="ECO:0000250" key="1"/>
<evidence type="ECO:0000250" key="2">
    <source>
        <dbReference type="UniProtKB" id="P02795"/>
    </source>
</evidence>
<evidence type="ECO:0000250" key="3">
    <source>
        <dbReference type="UniProtKB" id="P62339"/>
    </source>
</evidence>
<evidence type="ECO:0000305" key="4"/>
<dbReference type="EMBL" id="AF249875">
    <property type="protein sequence ID" value="AAF64232.1"/>
    <property type="molecule type" value="mRNA"/>
</dbReference>
<dbReference type="SMR" id="Q9I9I0"/>
<dbReference type="Ensembl" id="ENSCCRT00010018317.1">
    <property type="protein sequence ID" value="ENSCCRP00010016821.1"/>
    <property type="gene ID" value="ENSCCRG00010007178.1"/>
</dbReference>
<dbReference type="Ensembl" id="ENSCCRT00015118538.1">
    <property type="protein sequence ID" value="ENSCCRP00015114885.1"/>
    <property type="gene ID" value="ENSCCRG00015045420.1"/>
</dbReference>
<dbReference type="Ensembl" id="ENSCCRT00020112392.1">
    <property type="protein sequence ID" value="ENSCCRP00020102858.1"/>
    <property type="gene ID" value="ENSCCRG00020047051.1"/>
</dbReference>
<dbReference type="GeneID" id="109048941"/>
<dbReference type="KEGG" id="ccar:109048941"/>
<dbReference type="Proteomes" id="UP000694384">
    <property type="component" value="Unplaced"/>
</dbReference>
<dbReference type="Proteomes" id="UP000694427">
    <property type="component" value="Unplaced"/>
</dbReference>
<dbReference type="Proteomes" id="UP000694700">
    <property type="component" value="Unplaced"/>
</dbReference>
<dbReference type="Proteomes" id="UP000694701">
    <property type="component" value="Unplaced"/>
</dbReference>
<dbReference type="Proteomes" id="UP001155660">
    <property type="component" value="Chromosome A18"/>
</dbReference>
<dbReference type="GO" id="GO:0046872">
    <property type="term" value="F:metal ion binding"/>
    <property type="evidence" value="ECO:0007669"/>
    <property type="project" value="UniProtKB-KW"/>
</dbReference>
<dbReference type="FunFam" id="4.10.10.10:FF:000001">
    <property type="entry name" value="Metallothionein"/>
    <property type="match status" value="1"/>
</dbReference>
<dbReference type="Gene3D" id="4.10.10.10">
    <property type="entry name" value="Metallothionein Isoform II"/>
    <property type="match status" value="1"/>
</dbReference>
<dbReference type="InterPro" id="IPR017854">
    <property type="entry name" value="Metalthion_dom_sf"/>
</dbReference>
<dbReference type="InterPro" id="IPR023587">
    <property type="entry name" value="Metalthion_dom_sf_vert"/>
</dbReference>
<dbReference type="InterPro" id="IPR000006">
    <property type="entry name" value="Metalthion_vert"/>
</dbReference>
<dbReference type="InterPro" id="IPR018064">
    <property type="entry name" value="Metalthion_vert_metal_BS"/>
</dbReference>
<dbReference type="PANTHER" id="PTHR23299">
    <property type="entry name" value="METALLOTHIONEIN"/>
    <property type="match status" value="1"/>
</dbReference>
<dbReference type="PANTHER" id="PTHR23299:SF24">
    <property type="entry name" value="METALLOTHIONEIN-1X"/>
    <property type="match status" value="1"/>
</dbReference>
<dbReference type="Pfam" id="PF00131">
    <property type="entry name" value="Metallothio"/>
    <property type="match status" value="1"/>
</dbReference>
<dbReference type="PRINTS" id="PR00860">
    <property type="entry name" value="MTVERTEBRATE"/>
</dbReference>
<dbReference type="SUPFAM" id="SSF57868">
    <property type="entry name" value="Metallothionein"/>
    <property type="match status" value="1"/>
</dbReference>
<dbReference type="PROSITE" id="PS00203">
    <property type="entry name" value="METALLOTHIONEIN_VRT"/>
    <property type="match status" value="1"/>
</dbReference>
<feature type="chain" id="PRO_0000197280" description="Metallothionein-2">
    <location>
        <begin position="1"/>
        <end position="60"/>
    </location>
</feature>
<feature type="region of interest" description="Beta">
    <location>
        <begin position="1"/>
        <end position="28"/>
    </location>
</feature>
<feature type="region of interest" description="Alpha">
    <location>
        <begin position="29"/>
        <end position="60"/>
    </location>
</feature>
<feature type="binding site" evidence="2">
    <location>
        <position position="4"/>
    </location>
    <ligand>
        <name>a divalent metal cation</name>
        <dbReference type="ChEBI" id="CHEBI:60240"/>
        <label>1</label>
        <note>in cluster B</note>
    </ligand>
</feature>
<feature type="binding site" evidence="2">
    <location>
        <position position="6"/>
    </location>
    <ligand>
        <name>a divalent metal cation</name>
        <dbReference type="ChEBI" id="CHEBI:60240"/>
        <label>1</label>
        <note>in cluster B</note>
    </ligand>
</feature>
<feature type="binding site" evidence="2">
    <location>
        <position position="6"/>
    </location>
    <ligand>
        <name>a divalent metal cation</name>
        <dbReference type="ChEBI" id="CHEBI:60240"/>
        <label>2</label>
        <note>in cluster B</note>
    </ligand>
</feature>
<feature type="binding site" evidence="2">
    <location>
        <position position="12"/>
    </location>
    <ligand>
        <name>a divalent metal cation</name>
        <dbReference type="ChEBI" id="CHEBI:60240"/>
        <label>2</label>
        <note>in cluster B</note>
    </ligand>
</feature>
<feature type="binding site" evidence="2">
    <location>
        <position position="14"/>
    </location>
    <ligand>
        <name>a divalent metal cation</name>
        <dbReference type="ChEBI" id="CHEBI:60240"/>
        <label>2</label>
        <note>in cluster B</note>
    </ligand>
</feature>
<feature type="binding site" evidence="2">
    <location>
        <position position="14"/>
    </location>
    <ligand>
        <name>a divalent metal cation</name>
        <dbReference type="ChEBI" id="CHEBI:60240"/>
        <label>3</label>
        <note>in cluster B</note>
    </ligand>
</feature>
<feature type="binding site" evidence="2">
    <location>
        <position position="18"/>
    </location>
    <ligand>
        <name>a divalent metal cation</name>
        <dbReference type="ChEBI" id="CHEBI:60240"/>
        <label>3</label>
        <note>in cluster B</note>
    </ligand>
</feature>
<feature type="binding site" evidence="2">
    <location>
        <position position="20"/>
    </location>
    <ligand>
        <name>a divalent metal cation</name>
        <dbReference type="ChEBI" id="CHEBI:60240"/>
        <label>1</label>
        <note>in cluster B</note>
    </ligand>
</feature>
<feature type="binding site" evidence="2">
    <location>
        <position position="23"/>
    </location>
    <ligand>
        <name>a divalent metal cation</name>
        <dbReference type="ChEBI" id="CHEBI:60240"/>
        <label>1</label>
        <note>in cluster B</note>
    </ligand>
</feature>
<feature type="binding site" evidence="2">
    <location>
        <position position="23"/>
    </location>
    <ligand>
        <name>a divalent metal cation</name>
        <dbReference type="ChEBI" id="CHEBI:60240"/>
        <label>3</label>
        <note>in cluster B</note>
    </ligand>
</feature>
<feature type="binding site" evidence="2">
    <location>
        <position position="25"/>
    </location>
    <ligand>
        <name>a divalent metal cation</name>
        <dbReference type="ChEBI" id="CHEBI:60240"/>
        <label>2</label>
        <note>in cluster B</note>
    </ligand>
</feature>
<feature type="binding site" evidence="2">
    <location>
        <position position="28"/>
    </location>
    <ligand>
        <name>a divalent metal cation</name>
        <dbReference type="ChEBI" id="CHEBI:60240"/>
        <label>3</label>
        <note>in cluster B</note>
    </ligand>
</feature>
<feature type="binding site" evidence="2">
    <location>
        <position position="32"/>
    </location>
    <ligand>
        <name>a divalent metal cation</name>
        <dbReference type="ChEBI" id="CHEBI:60240"/>
        <label>4</label>
        <note>in cluster A</note>
    </ligand>
</feature>
<feature type="binding site" evidence="2">
    <location>
        <position position="33"/>
    </location>
    <ligand>
        <name>a divalent metal cation</name>
        <dbReference type="ChEBI" id="CHEBI:60240"/>
        <label>4</label>
        <note>in cluster A</note>
    </ligand>
</feature>
<feature type="binding site" evidence="2">
    <location>
        <position position="33"/>
    </location>
    <ligand>
        <name>a divalent metal cation</name>
        <dbReference type="ChEBI" id="CHEBI:60240"/>
        <label>5</label>
        <note>in cluster A</note>
    </ligand>
</feature>
<feature type="binding site" evidence="2">
    <location>
        <position position="35"/>
    </location>
    <ligand>
        <name>a divalent metal cation</name>
        <dbReference type="ChEBI" id="CHEBI:60240"/>
        <label>5</label>
        <note>in cluster A</note>
    </ligand>
</feature>
<feature type="binding site" evidence="2">
    <location>
        <position position="36"/>
    </location>
    <ligand>
        <name>a divalent metal cation</name>
        <dbReference type="ChEBI" id="CHEBI:60240"/>
        <label>5</label>
        <note>in cluster A</note>
    </ligand>
</feature>
<feature type="binding site" evidence="2">
    <location>
        <position position="36"/>
    </location>
    <ligand>
        <name>a divalent metal cation</name>
        <dbReference type="ChEBI" id="CHEBI:60240"/>
        <label>6</label>
        <note>in cluster A</note>
    </ligand>
</feature>
<feature type="binding site" evidence="2">
    <location>
        <position position="40"/>
    </location>
    <ligand>
        <name>a divalent metal cation</name>
        <dbReference type="ChEBI" id="CHEBI:60240"/>
        <label>6</label>
        <note>in cluster A</note>
    </ligand>
</feature>
<feature type="binding site" evidence="2">
    <location>
        <position position="43"/>
    </location>
    <ligand>
        <name>a divalent metal cation</name>
        <dbReference type="ChEBI" id="CHEBI:60240"/>
        <label>4</label>
        <note>in cluster A</note>
    </ligand>
</feature>
<feature type="binding site" evidence="2">
    <location>
        <position position="43"/>
    </location>
    <ligand>
        <name>a divalent metal cation</name>
        <dbReference type="ChEBI" id="CHEBI:60240"/>
        <label>6</label>
        <note>in cluster A</note>
    </ligand>
</feature>
<feature type="binding site" evidence="2">
    <location>
        <position position="47"/>
    </location>
    <ligand>
        <name>a divalent metal cation</name>
        <dbReference type="ChEBI" id="CHEBI:60240"/>
        <label>4</label>
        <note>in cluster A</note>
    </ligand>
</feature>
<feature type="binding site" evidence="2">
    <location>
        <position position="49"/>
    </location>
    <ligand>
        <name>a divalent metal cation</name>
        <dbReference type="ChEBI" id="CHEBI:60240"/>
        <label>5</label>
        <note>in cluster A</note>
    </ligand>
</feature>
<feature type="binding site" evidence="2">
    <location>
        <position position="49"/>
    </location>
    <ligand>
        <name>a divalent metal cation</name>
        <dbReference type="ChEBI" id="CHEBI:60240"/>
        <label>7</label>
        <note>in cluster A</note>
    </ligand>
</feature>
<feature type="binding site" evidence="3">
    <location>
        <position position="54"/>
    </location>
    <ligand>
        <name>a divalent metal cation</name>
        <dbReference type="ChEBI" id="CHEBI:60240"/>
        <label>7</label>
        <note>in cluster A</note>
    </ligand>
</feature>
<feature type="binding site" evidence="2">
    <location>
        <position position="58"/>
    </location>
    <ligand>
        <name>a divalent metal cation</name>
        <dbReference type="ChEBI" id="CHEBI:60240"/>
        <label>7</label>
        <note>in cluster A</note>
    </ligand>
</feature>
<feature type="binding site" evidence="2">
    <location>
        <position position="59"/>
    </location>
    <ligand>
        <name>a divalent metal cation</name>
        <dbReference type="ChEBI" id="CHEBI:60240"/>
        <label>6</label>
        <note>in cluster A</note>
    </ligand>
</feature>
<feature type="binding site" evidence="2">
    <location>
        <position position="59"/>
    </location>
    <ligand>
        <name>a divalent metal cation</name>
        <dbReference type="ChEBI" id="CHEBI:60240"/>
        <label>7</label>
        <note>in cluster A</note>
    </ligand>
</feature>
<protein>
    <recommendedName>
        <fullName>Metallothionein-2</fullName>
        <shortName>MT-2</shortName>
    </recommendedName>
    <alternativeName>
        <fullName>Metallothionein-II</fullName>
        <shortName>MT-II</shortName>
    </alternativeName>
</protein>
<accession>Q9I9I0</accession>
<proteinExistence type="inferred from homology"/>
<gene>
    <name type="primary">mt2</name>
</gene>
<sequence length="60" mass="5962">MDPCDCAKTGTCNCGATCKCTNCQCTTCKKSCCSCCPSGCSKCASGCVCKGNSCGSSCCQ</sequence>
<name>MT2_CYPCA</name>
<reference key="1">
    <citation type="journal article" date="2002" name="Acta Biol. Hung.">
        <title>Differential regulation of the two metallothionein genes in common carp.</title>
        <authorList>
            <person name="Hermesz E."/>
            <person name="Gazdag A.P."/>
            <person name="Ali K.S."/>
            <person name="Nemcsok J."/>
            <person name="Abraham M."/>
        </authorList>
    </citation>
    <scope>NUCLEOTIDE SEQUENCE [MRNA]</scope>
</reference>
<organism>
    <name type="scientific">Cyprinus carpio</name>
    <name type="common">Common carp</name>
    <dbReference type="NCBI Taxonomy" id="7962"/>
    <lineage>
        <taxon>Eukaryota</taxon>
        <taxon>Metazoa</taxon>
        <taxon>Chordata</taxon>
        <taxon>Craniata</taxon>
        <taxon>Vertebrata</taxon>
        <taxon>Euteleostomi</taxon>
        <taxon>Actinopterygii</taxon>
        <taxon>Neopterygii</taxon>
        <taxon>Teleostei</taxon>
        <taxon>Ostariophysi</taxon>
        <taxon>Cypriniformes</taxon>
        <taxon>Cyprinidae</taxon>
        <taxon>Cyprininae</taxon>
        <taxon>Cyprinus</taxon>
    </lineage>
</organism>